<proteinExistence type="inferred from homology"/>
<dbReference type="EMBL" id="BA000001">
    <property type="protein sequence ID" value="BAA29723.1"/>
    <property type="molecule type" value="Genomic_DNA"/>
</dbReference>
<dbReference type="PIR" id="A71108">
    <property type="entry name" value="A71108"/>
</dbReference>
<dbReference type="RefSeq" id="WP_010884731.1">
    <property type="nucleotide sequence ID" value="NC_000961.1"/>
</dbReference>
<dbReference type="SMR" id="O58367"/>
<dbReference type="STRING" id="70601.gene:9377576"/>
<dbReference type="EnsemblBacteria" id="BAA29723">
    <property type="protein sequence ID" value="BAA29723"/>
    <property type="gene ID" value="BAA29723"/>
</dbReference>
<dbReference type="KEGG" id="pho:PH0633"/>
<dbReference type="eggNOG" id="arCOG04113">
    <property type="taxonomic scope" value="Archaea"/>
</dbReference>
<dbReference type="OrthoDB" id="30538at2157"/>
<dbReference type="Proteomes" id="UP000000752">
    <property type="component" value="Chromosome"/>
</dbReference>
<dbReference type="GO" id="GO:1990904">
    <property type="term" value="C:ribonucleoprotein complex"/>
    <property type="evidence" value="ECO:0007669"/>
    <property type="project" value="UniProtKB-KW"/>
</dbReference>
<dbReference type="GO" id="GO:0005840">
    <property type="term" value="C:ribosome"/>
    <property type="evidence" value="ECO:0007669"/>
    <property type="project" value="UniProtKB-KW"/>
</dbReference>
<dbReference type="GO" id="GO:0003735">
    <property type="term" value="F:structural constituent of ribosome"/>
    <property type="evidence" value="ECO:0007669"/>
    <property type="project" value="InterPro"/>
</dbReference>
<dbReference type="GO" id="GO:0006412">
    <property type="term" value="P:translation"/>
    <property type="evidence" value="ECO:0007669"/>
    <property type="project" value="UniProtKB-UniRule"/>
</dbReference>
<dbReference type="CDD" id="cd01433">
    <property type="entry name" value="Ribosomal_L16_L10e"/>
    <property type="match status" value="1"/>
</dbReference>
<dbReference type="Gene3D" id="3.90.1170.10">
    <property type="entry name" value="Ribosomal protein L10e/L16"/>
    <property type="match status" value="1"/>
</dbReference>
<dbReference type="HAMAP" id="MF_00448">
    <property type="entry name" value="Ribosomal_uL16_arch"/>
    <property type="match status" value="1"/>
</dbReference>
<dbReference type="InterPro" id="IPR047873">
    <property type="entry name" value="Ribosomal_uL16"/>
</dbReference>
<dbReference type="InterPro" id="IPR022981">
    <property type="entry name" value="Ribosomal_uL16_arc"/>
</dbReference>
<dbReference type="InterPro" id="IPR018255">
    <property type="entry name" value="Ribosomal_uL16_CS_euk_arc"/>
</dbReference>
<dbReference type="InterPro" id="IPR016180">
    <property type="entry name" value="Ribosomal_uL16_dom"/>
</dbReference>
<dbReference type="InterPro" id="IPR001197">
    <property type="entry name" value="Ribosomal_uL16_euk_arch"/>
</dbReference>
<dbReference type="InterPro" id="IPR036920">
    <property type="entry name" value="Ribosomal_uL16_sf"/>
</dbReference>
<dbReference type="NCBIfam" id="NF003237">
    <property type="entry name" value="PRK04199.1-2"/>
    <property type="match status" value="1"/>
</dbReference>
<dbReference type="NCBIfam" id="NF003239">
    <property type="entry name" value="PRK04199.1-4"/>
    <property type="match status" value="1"/>
</dbReference>
<dbReference type="PANTHER" id="PTHR11726">
    <property type="entry name" value="60S RIBOSOMAL PROTEIN L10"/>
    <property type="match status" value="1"/>
</dbReference>
<dbReference type="Pfam" id="PF00252">
    <property type="entry name" value="Ribosomal_L16"/>
    <property type="match status" value="1"/>
</dbReference>
<dbReference type="PIRSF" id="PIRSF005590">
    <property type="entry name" value="Ribosomal_L10"/>
    <property type="match status" value="1"/>
</dbReference>
<dbReference type="SUPFAM" id="SSF54686">
    <property type="entry name" value="Ribosomal protein L16p/L10e"/>
    <property type="match status" value="1"/>
</dbReference>
<dbReference type="PROSITE" id="PS01257">
    <property type="entry name" value="RIBOSOMAL_L10E"/>
    <property type="match status" value="1"/>
</dbReference>
<keyword id="KW-0687">Ribonucleoprotein</keyword>
<keyword id="KW-0689">Ribosomal protein</keyword>
<comment type="similarity">
    <text evidence="1">Belongs to the universal ribosomal protein uL16 family.</text>
</comment>
<organism>
    <name type="scientific">Pyrococcus horikoshii (strain ATCC 700860 / DSM 12428 / JCM 9974 / NBRC 100139 / OT-3)</name>
    <dbReference type="NCBI Taxonomy" id="70601"/>
    <lineage>
        <taxon>Archaea</taxon>
        <taxon>Methanobacteriati</taxon>
        <taxon>Methanobacteriota</taxon>
        <taxon>Thermococci</taxon>
        <taxon>Thermococcales</taxon>
        <taxon>Thermococcaceae</taxon>
        <taxon>Pyrococcus</taxon>
    </lineage>
</organism>
<evidence type="ECO:0000255" key="1">
    <source>
        <dbReference type="HAMAP-Rule" id="MF_00448"/>
    </source>
</evidence>
<evidence type="ECO:0000305" key="2"/>
<name>RL10E_PYRHO</name>
<reference key="1">
    <citation type="journal article" date="1998" name="DNA Res.">
        <title>Complete sequence and gene organization of the genome of a hyper-thermophilic archaebacterium, Pyrococcus horikoshii OT3.</title>
        <authorList>
            <person name="Kawarabayasi Y."/>
            <person name="Sawada M."/>
            <person name="Horikawa H."/>
            <person name="Haikawa Y."/>
            <person name="Hino Y."/>
            <person name="Yamamoto S."/>
            <person name="Sekine M."/>
            <person name="Baba S."/>
            <person name="Kosugi H."/>
            <person name="Hosoyama A."/>
            <person name="Nagai Y."/>
            <person name="Sakai M."/>
            <person name="Ogura K."/>
            <person name="Otsuka R."/>
            <person name="Nakazawa H."/>
            <person name="Takamiya M."/>
            <person name="Ohfuku Y."/>
            <person name="Funahashi T."/>
            <person name="Tanaka T."/>
            <person name="Kudoh Y."/>
            <person name="Yamazaki J."/>
            <person name="Kushida N."/>
            <person name="Oguchi A."/>
            <person name="Aoki K."/>
            <person name="Yoshizawa T."/>
            <person name="Nakamura Y."/>
            <person name="Robb F.T."/>
            <person name="Horikoshi K."/>
            <person name="Masuchi Y."/>
            <person name="Shizuya H."/>
            <person name="Kikuchi H."/>
        </authorList>
    </citation>
    <scope>NUCLEOTIDE SEQUENCE [LARGE SCALE GENOMIC DNA]</scope>
    <source>
        <strain>ATCC 700860 / DSM 12428 / JCM 9974 / NBRC 100139 / OT-3</strain>
    </source>
</reference>
<protein>
    <recommendedName>
        <fullName evidence="1">Large ribosomal subunit protein uL16</fullName>
    </recommendedName>
    <alternativeName>
        <fullName evidence="2">50S ribosomal protein L10e</fullName>
    </alternativeName>
</protein>
<gene>
    <name evidence="1" type="primary">rpl10e</name>
    <name type="ordered locus">PH0633</name>
    <name type="ORF">PHAE019</name>
</gene>
<sequence>MALRPAKIDRYVDKPAYTRREYIRGAPGPKITIFDMGNPAGDFEFEVALHTAEPVQIRQNALEAARQQVNRYLQKNVGRSNYHFKIRVYPFQVLRENPMATGRKADRYGNGMRRPFGKPIGLAARLKRDQKILSIRVNRQHLKFAIEGARRAAMKFPCKCYYRIYDKEGNDVTTKILSQGL</sequence>
<accession>O58367</accession>
<feature type="chain" id="PRO_0000147145" description="Large ribosomal subunit protein uL16">
    <location>
        <begin position="1"/>
        <end position="181"/>
    </location>
</feature>